<protein>
    <recommendedName>
        <fullName>Natterin-3</fullName>
        <ecNumber>3.4.-.-</ecNumber>
    </recommendedName>
</protein>
<organism>
    <name type="scientific">Thalassophryne nattereri</name>
    <name type="common">Copper Joe toadfish</name>
    <dbReference type="NCBI Taxonomy" id="289382"/>
    <lineage>
        <taxon>Eukaryota</taxon>
        <taxon>Metazoa</taxon>
        <taxon>Chordata</taxon>
        <taxon>Craniata</taxon>
        <taxon>Vertebrata</taxon>
        <taxon>Euteleostomi</taxon>
        <taxon>Actinopterygii</taxon>
        <taxon>Neopterygii</taxon>
        <taxon>Teleostei</taxon>
        <taxon>Neoteleostei</taxon>
        <taxon>Acanthomorphata</taxon>
        <taxon>Batrachoidaria</taxon>
        <taxon>Batrachoididae</taxon>
        <taxon>Thalassophryne</taxon>
    </lineage>
</organism>
<accession>Q66S17</accession>
<dbReference type="EC" id="3.4.-.-"/>
<dbReference type="EMBL" id="AY707910">
    <property type="protein sequence ID" value="AAU11824.1"/>
    <property type="molecule type" value="mRNA"/>
</dbReference>
<dbReference type="SMR" id="Q66S17"/>
<dbReference type="TCDB" id="1.C.4.6.1">
    <property type="family name" value="the aerolysin channel-forming toxin (aerolysin) family"/>
</dbReference>
<dbReference type="GO" id="GO:0005576">
    <property type="term" value="C:extracellular region"/>
    <property type="evidence" value="ECO:0007669"/>
    <property type="project" value="UniProtKB-SubCell"/>
</dbReference>
<dbReference type="GO" id="GO:0016787">
    <property type="term" value="F:hydrolase activity"/>
    <property type="evidence" value="ECO:0007669"/>
    <property type="project" value="UniProtKB-KW"/>
</dbReference>
<dbReference type="GO" id="GO:0090729">
    <property type="term" value="F:toxin activity"/>
    <property type="evidence" value="ECO:0007669"/>
    <property type="project" value="UniProtKB-KW"/>
</dbReference>
<dbReference type="CDD" id="cd20220">
    <property type="entry name" value="PFM_natterin-3-like"/>
    <property type="match status" value="1"/>
</dbReference>
<dbReference type="Gene3D" id="2.170.15.10">
    <property type="entry name" value="Proaerolysin, chain A, domain 3"/>
    <property type="match status" value="1"/>
</dbReference>
<dbReference type="InterPro" id="IPR006616">
    <property type="entry name" value="DM9_repeat"/>
</dbReference>
<dbReference type="InterPro" id="IPR053237">
    <property type="entry name" value="Natterin_C"/>
</dbReference>
<dbReference type="PANTHER" id="PTHR39244:SF5">
    <property type="entry name" value="NATTERIN-3-LIKE"/>
    <property type="match status" value="1"/>
</dbReference>
<dbReference type="PANTHER" id="PTHR39244">
    <property type="entry name" value="NATTERIN-4"/>
    <property type="match status" value="1"/>
</dbReference>
<dbReference type="Pfam" id="PF11901">
    <property type="entry name" value="DM9"/>
    <property type="match status" value="1"/>
</dbReference>
<dbReference type="SMART" id="SM00696">
    <property type="entry name" value="DM9"/>
    <property type="match status" value="1"/>
</dbReference>
<dbReference type="SUPFAM" id="SSF56973">
    <property type="entry name" value="Aerolisin/ETX pore-forming domain"/>
    <property type="match status" value="1"/>
</dbReference>
<name>NATT3_THANI</name>
<feature type="signal peptide" evidence="2">
    <location>
        <begin position="1"/>
        <end position="18"/>
    </location>
</feature>
<feature type="propeptide" id="PRO_0000285219" evidence="5">
    <location>
        <begin position="19"/>
        <end position="42"/>
    </location>
</feature>
<feature type="chain" id="PRO_5000093997" description="Natterin-3" evidence="5">
    <location>
        <begin position="43"/>
        <end position="364"/>
    </location>
</feature>
<comment type="function">
    <text evidence="1">Shows nociceptive, edema-inducing and kininogenase activity with release of kallidin from low molecular weight kininogen. The cleavage occurs at Met-Lys bonds.</text>
</comment>
<comment type="activity regulation">
    <text evidence="1">Inhibited by tissue-kallikrein inhibitor TKI and trasylol. Plasma kallikrein inhibitor PKSI527 and classical inhibitors of serine-, metallo-, thiol- or aspartate-peptidases evokes a minor inhibition of the peptide digestion.</text>
</comment>
<comment type="subcellular location">
    <subcellularLocation>
        <location evidence="3">Secreted</location>
    </subcellularLocation>
</comment>
<comment type="tissue specificity">
    <text evidence="3">Expressed by the venom gland.</text>
</comment>
<comment type="PTM">
    <text evidence="4">Contains 4 disulfide bonds.</text>
</comment>
<comment type="similarity">
    <text evidence="4">Belongs to the natterin family.</text>
</comment>
<proteinExistence type="evidence at protein level"/>
<reference key="1">
    <citation type="journal article" date="2005" name="Biochimie">
        <title>Natterins, a new class of proteins with kininogenase activity characterized from Thalassophryne nattereri fish venom.</title>
        <authorList>
            <person name="Magalhaes G.S."/>
            <person name="Lopes-Ferreira M."/>
            <person name="Junqueira-de-Azevedo I.L.M."/>
            <person name="Spencer P.J."/>
            <person name="Araujo M.S."/>
            <person name="Portaro F.C.V."/>
            <person name="Ma L."/>
            <person name="Valente R.H."/>
            <person name="Juliano L."/>
            <person name="Fox J.W."/>
            <person name="Ho P.L."/>
            <person name="Moura-da-Silva A.M."/>
        </authorList>
    </citation>
    <scope>NUCLEOTIDE SEQUENCE [MRNA]</scope>
    <scope>PROTEIN SEQUENCE OF 109-118; 177-189; 193-206; 312-316 AND 342-349</scope>
    <scope>SUBCELLULAR LOCATION</scope>
    <scope>TISSUE SPECIFICITY</scope>
    <scope>IDENTIFICATION BY MASS SPECTROMETRY</scope>
    <source>
        <tissue>Venom</tissue>
        <tissue>Venom gland</tissue>
    </source>
</reference>
<evidence type="ECO:0000250" key="1">
    <source>
        <dbReference type="UniProtKB" id="Q66S25"/>
    </source>
</evidence>
<evidence type="ECO:0000255" key="2"/>
<evidence type="ECO:0000269" key="3">
    <source>
    </source>
</evidence>
<evidence type="ECO:0000305" key="4"/>
<evidence type="ECO:0000305" key="5">
    <source>
    </source>
</evidence>
<keyword id="KW-0903">Direct protein sequencing</keyword>
<keyword id="KW-1015">Disulfide bond</keyword>
<keyword id="KW-0378">Hydrolase</keyword>
<keyword id="KW-0964">Secreted</keyword>
<keyword id="KW-0732">Signal</keyword>
<keyword id="KW-0800">Toxin</keyword>
<sequence>MKLSVLVVTLLAVSWTSAQPETFSIQTKEANMNPEPANIRVARSSSAQSNLQWNYWDGQGAVPDGAVSIWNGEEKRTDYVCSCGCSSGFYSTKTGANCHYAYGETEKTCSGFSILVNRDNFENLEWKGGSDGSVPKNAVEVCEKVYVGKNKYGLGKVHTKHEALFLPWHGEEHWYKDYEVLTVNDDVVKQELTQVNYKLDAAHPIKNPPETLRRSSASNSQCRPITKTVALEKAIQTEQSWDVTSTVTFGVESSITAGIPDIASATVSVSVETSLSVSLGSTTTKTTTHTVSVIVTVPPNHYCPVTMVATKYTADIPFTGKMTRTYRNGQKRTTSITGTYRAIQVGEIRADVQRCSEIAGAKPC</sequence>